<dbReference type="EMBL" id="CP000783">
    <property type="protein sequence ID" value="ABU76337.1"/>
    <property type="molecule type" value="Genomic_DNA"/>
</dbReference>
<dbReference type="SMR" id="A7MLL9"/>
<dbReference type="KEGG" id="esa:ESA_01069"/>
<dbReference type="HOGENOM" id="CLU_074944_2_0_6"/>
<dbReference type="Proteomes" id="UP000000260">
    <property type="component" value="Chromosome"/>
</dbReference>
<dbReference type="GO" id="GO:0005829">
    <property type="term" value="C:cytosol"/>
    <property type="evidence" value="ECO:0007669"/>
    <property type="project" value="UniProtKB-ARBA"/>
</dbReference>
<dbReference type="GO" id="GO:0003746">
    <property type="term" value="F:translation elongation factor activity"/>
    <property type="evidence" value="ECO:0007669"/>
    <property type="project" value="UniProtKB-UniRule"/>
</dbReference>
<dbReference type="GO" id="GO:0043043">
    <property type="term" value="P:peptide biosynthetic process"/>
    <property type="evidence" value="ECO:0007669"/>
    <property type="project" value="InterPro"/>
</dbReference>
<dbReference type="CDD" id="cd04470">
    <property type="entry name" value="S1_EF-P_repeat_1"/>
    <property type="match status" value="1"/>
</dbReference>
<dbReference type="CDD" id="cd05794">
    <property type="entry name" value="S1_EF-P_repeat_2"/>
    <property type="match status" value="1"/>
</dbReference>
<dbReference type="FunFam" id="2.40.50.140:FF:000004">
    <property type="entry name" value="Elongation factor P"/>
    <property type="match status" value="1"/>
</dbReference>
<dbReference type="FunFam" id="2.30.30.30:FF:000011">
    <property type="entry name" value="Elongation factor P-like protein"/>
    <property type="match status" value="1"/>
</dbReference>
<dbReference type="FunFam" id="2.40.50.140:FF:000053">
    <property type="entry name" value="Elongation factor P-like protein"/>
    <property type="match status" value="1"/>
</dbReference>
<dbReference type="Gene3D" id="2.30.30.30">
    <property type="match status" value="1"/>
</dbReference>
<dbReference type="Gene3D" id="2.40.50.140">
    <property type="entry name" value="Nucleic acid-binding proteins"/>
    <property type="match status" value="2"/>
</dbReference>
<dbReference type="HAMAP" id="MF_00646">
    <property type="entry name" value="EFP"/>
    <property type="match status" value="1"/>
</dbReference>
<dbReference type="InterPro" id="IPR015365">
    <property type="entry name" value="Elong-fact-P_C"/>
</dbReference>
<dbReference type="InterPro" id="IPR012340">
    <property type="entry name" value="NA-bd_OB-fold"/>
</dbReference>
<dbReference type="InterPro" id="IPR014722">
    <property type="entry name" value="Rib_uL2_dom2"/>
</dbReference>
<dbReference type="InterPro" id="IPR020599">
    <property type="entry name" value="Transl_elong_fac_P/YeiP"/>
</dbReference>
<dbReference type="InterPro" id="IPR013185">
    <property type="entry name" value="Transl_elong_KOW-like"/>
</dbReference>
<dbReference type="InterPro" id="IPR011897">
    <property type="entry name" value="Transl_elong_p-like_YeiP"/>
</dbReference>
<dbReference type="InterPro" id="IPR001059">
    <property type="entry name" value="Transl_elong_P/YeiP_cen"/>
</dbReference>
<dbReference type="InterPro" id="IPR013852">
    <property type="entry name" value="Transl_elong_P/YeiP_CS"/>
</dbReference>
<dbReference type="InterPro" id="IPR008991">
    <property type="entry name" value="Translation_prot_SH3-like_sf"/>
</dbReference>
<dbReference type="NCBIfam" id="NF001810">
    <property type="entry name" value="PRK00529.1"/>
    <property type="match status" value="1"/>
</dbReference>
<dbReference type="NCBIfam" id="NF003392">
    <property type="entry name" value="PRK04542.1"/>
    <property type="match status" value="1"/>
</dbReference>
<dbReference type="NCBIfam" id="TIGR02178">
    <property type="entry name" value="yeiP"/>
    <property type="match status" value="1"/>
</dbReference>
<dbReference type="PANTHER" id="PTHR30053">
    <property type="entry name" value="ELONGATION FACTOR P"/>
    <property type="match status" value="1"/>
</dbReference>
<dbReference type="PANTHER" id="PTHR30053:SF14">
    <property type="entry name" value="TRANSLATION ELONGATION FACTOR KOW-LIKE DOMAIN-CONTAINING PROTEIN"/>
    <property type="match status" value="1"/>
</dbReference>
<dbReference type="Pfam" id="PF01132">
    <property type="entry name" value="EFP"/>
    <property type="match status" value="1"/>
</dbReference>
<dbReference type="Pfam" id="PF08207">
    <property type="entry name" value="EFP_N"/>
    <property type="match status" value="1"/>
</dbReference>
<dbReference type="Pfam" id="PF09285">
    <property type="entry name" value="Elong-fact-P_C"/>
    <property type="match status" value="1"/>
</dbReference>
<dbReference type="PIRSF" id="PIRSF005901">
    <property type="entry name" value="EF-P"/>
    <property type="match status" value="1"/>
</dbReference>
<dbReference type="SMART" id="SM01185">
    <property type="entry name" value="EFP"/>
    <property type="match status" value="1"/>
</dbReference>
<dbReference type="SMART" id="SM00841">
    <property type="entry name" value="Elong-fact-P_C"/>
    <property type="match status" value="1"/>
</dbReference>
<dbReference type="SUPFAM" id="SSF50249">
    <property type="entry name" value="Nucleic acid-binding proteins"/>
    <property type="match status" value="2"/>
</dbReference>
<dbReference type="SUPFAM" id="SSF50104">
    <property type="entry name" value="Translation proteins SH3-like domain"/>
    <property type="match status" value="1"/>
</dbReference>
<dbReference type="PROSITE" id="PS01275">
    <property type="entry name" value="EFP"/>
    <property type="match status" value="1"/>
</dbReference>
<proteinExistence type="inferred from homology"/>
<gene>
    <name type="ordered locus">ESA_01069</name>
</gene>
<name>EFPL_CROS8</name>
<reference key="1">
    <citation type="journal article" date="2010" name="PLoS ONE">
        <title>Genome sequence of Cronobacter sakazakii BAA-894 and comparative genomic hybridization analysis with other Cronobacter species.</title>
        <authorList>
            <person name="Kucerova E."/>
            <person name="Clifton S.W."/>
            <person name="Xia X.Q."/>
            <person name="Long F."/>
            <person name="Porwollik S."/>
            <person name="Fulton L."/>
            <person name="Fronick C."/>
            <person name="Minx P."/>
            <person name="Kyung K."/>
            <person name="Warren W."/>
            <person name="Fulton R."/>
            <person name="Feng D."/>
            <person name="Wollam A."/>
            <person name="Shah N."/>
            <person name="Bhonagiri V."/>
            <person name="Nash W.E."/>
            <person name="Hallsworth-Pepin K."/>
            <person name="Wilson R.K."/>
            <person name="McClelland M."/>
            <person name="Forsythe S.J."/>
        </authorList>
    </citation>
    <scope>NUCLEOTIDE SEQUENCE [LARGE SCALE GENOMIC DNA]</scope>
    <source>
        <strain>ATCC BAA-894</strain>
    </source>
</reference>
<accession>A7MLL9</accession>
<feature type="chain" id="PRO_1000056946" description="Elongation factor P-like protein">
    <location>
        <begin position="1"/>
        <end position="190"/>
    </location>
</feature>
<evidence type="ECO:0000255" key="1">
    <source>
        <dbReference type="HAMAP-Rule" id="MF_00646"/>
    </source>
</evidence>
<comment type="similarity">
    <text evidence="1">Belongs to the elongation factor P family.</text>
</comment>
<organism>
    <name type="scientific">Cronobacter sakazakii (strain ATCC BAA-894)</name>
    <name type="common">Enterobacter sakazakii</name>
    <dbReference type="NCBI Taxonomy" id="290339"/>
    <lineage>
        <taxon>Bacteria</taxon>
        <taxon>Pseudomonadati</taxon>
        <taxon>Pseudomonadota</taxon>
        <taxon>Gammaproteobacteria</taxon>
        <taxon>Enterobacterales</taxon>
        <taxon>Enterobacteriaceae</taxon>
        <taxon>Cronobacter</taxon>
    </lineage>
</organism>
<sequence>MPRANEIKKGMVLNYNGKLLIVKDIDIQSPSARGAATLYKMRFSDVRTGQKVEERFKGDDILDTITLTRRFVDFSYVDGNEYVFMDKEDYTPYTFTKDQIEEELLFMPEGGMPDMQVLTWDGQLLALELPQTVDLEIVETAPGIKGASASARSKPATLSTGVVIQVPEYLSAGEKIRVHIAERRYMGRAE</sequence>
<keyword id="KW-1185">Reference proteome</keyword>
<protein>
    <recommendedName>
        <fullName evidence="1">Elongation factor P-like protein</fullName>
    </recommendedName>
</protein>